<evidence type="ECO:0000250" key="1">
    <source>
        <dbReference type="UniProtKB" id="P22725"/>
    </source>
</evidence>
<evidence type="ECO:0000250" key="2">
    <source>
        <dbReference type="UniProtKB" id="P27467"/>
    </source>
</evidence>
<evidence type="ECO:0000250" key="3">
    <source>
        <dbReference type="UniProtKB" id="P28026"/>
    </source>
</evidence>
<evidence type="ECO:0000250" key="4">
    <source>
        <dbReference type="UniProtKB" id="P41221"/>
    </source>
</evidence>
<evidence type="ECO:0000250" key="5">
    <source>
        <dbReference type="UniProtKB" id="P56704"/>
    </source>
</evidence>
<evidence type="ECO:0000255" key="6"/>
<evidence type="ECO:0000269" key="7">
    <source>
    </source>
</evidence>
<evidence type="ECO:0000303" key="8">
    <source>
    </source>
</evidence>
<evidence type="ECO:0000305" key="9"/>
<evidence type="ECO:0000312" key="10">
    <source>
        <dbReference type="EMBL" id="ABD47459.1"/>
    </source>
</evidence>
<keyword id="KW-0891">Chondrogenesis</keyword>
<keyword id="KW-0217">Developmental protein</keyword>
<keyword id="KW-0221">Differentiation</keyword>
<keyword id="KW-1015">Disulfide bond</keyword>
<keyword id="KW-0272">Extracellular matrix</keyword>
<keyword id="KW-0325">Glycoprotein</keyword>
<keyword id="KW-0449">Lipoprotein</keyword>
<keyword id="KW-1185">Reference proteome</keyword>
<keyword id="KW-0964">Secreted</keyword>
<keyword id="KW-0732">Signal</keyword>
<keyword id="KW-0879">Wnt signaling pathway</keyword>
<name>WNT5A_RABIT</name>
<reference evidence="9 10" key="1">
    <citation type="journal article" date="2006" name="J. Biol. Chem.">
        <title>Opposing roles of WNT-5A and WNT-11 in interleukin-1beta regulation of type II collagen expression in articular chondrocytes.</title>
        <authorList>
            <person name="Ryu J.-H."/>
            <person name="Chun J.-S."/>
        </authorList>
    </citation>
    <scope>NUCLEOTIDE SEQUENCE [MRNA]</scope>
    <scope>FUNCTION</scope>
    <scope>SUBCELLULAR LOCATION</scope>
    <scope>INDUCTION</scope>
    <source>
        <tissue evidence="10">Articular cartilage</tissue>
    </source>
</reference>
<dbReference type="EMBL" id="DQ388600">
    <property type="protein sequence ID" value="ABD47459.1"/>
    <property type="molecule type" value="mRNA"/>
</dbReference>
<dbReference type="RefSeq" id="NP_001076134.1">
    <property type="nucleotide sequence ID" value="NM_001082665.1"/>
</dbReference>
<dbReference type="SMR" id="Q27Q52"/>
<dbReference type="FunCoup" id="Q27Q52">
    <property type="interactions" value="22"/>
</dbReference>
<dbReference type="STRING" id="9986.ENSOCUP00000000333"/>
<dbReference type="GlyCosmos" id="Q27Q52">
    <property type="glycosylation" value="4 sites, No reported glycans"/>
</dbReference>
<dbReference type="PaxDb" id="9986-ENSOCUP00000000333"/>
<dbReference type="Ensembl" id="ENSOCUT00000000379.4">
    <property type="protein sequence ID" value="ENSOCUP00000000333.4"/>
    <property type="gene ID" value="ENSOCUG00000000380.4"/>
</dbReference>
<dbReference type="GeneID" id="100009381"/>
<dbReference type="KEGG" id="ocu:100009381"/>
<dbReference type="CTD" id="7474"/>
<dbReference type="eggNOG" id="KOG3913">
    <property type="taxonomic scope" value="Eukaryota"/>
</dbReference>
<dbReference type="GeneTree" id="ENSGT00940000158894"/>
<dbReference type="InParanoid" id="Q27Q52"/>
<dbReference type="OrthoDB" id="5945655at2759"/>
<dbReference type="Proteomes" id="UP000001811">
    <property type="component" value="Chromosome 9"/>
</dbReference>
<dbReference type="Bgee" id="ENSOCUG00000000380">
    <property type="expression patterns" value="Expressed in uterus and 15 other cell types or tissues"/>
</dbReference>
<dbReference type="ExpressionAtlas" id="Q27Q52">
    <property type="expression patterns" value="baseline"/>
</dbReference>
<dbReference type="GO" id="GO:0009986">
    <property type="term" value="C:cell surface"/>
    <property type="evidence" value="ECO:0007669"/>
    <property type="project" value="Ensembl"/>
</dbReference>
<dbReference type="GO" id="GO:0031012">
    <property type="term" value="C:extracellular matrix"/>
    <property type="evidence" value="ECO:0007669"/>
    <property type="project" value="Ensembl"/>
</dbReference>
<dbReference type="GO" id="GO:0005615">
    <property type="term" value="C:extracellular space"/>
    <property type="evidence" value="ECO:0007669"/>
    <property type="project" value="Ensembl"/>
</dbReference>
<dbReference type="GO" id="GO:0098978">
    <property type="term" value="C:glutamatergic synapse"/>
    <property type="evidence" value="ECO:0007669"/>
    <property type="project" value="Ensembl"/>
</dbReference>
<dbReference type="GO" id="GO:0098794">
    <property type="term" value="C:postsynapse"/>
    <property type="evidence" value="ECO:0007669"/>
    <property type="project" value="GOC"/>
</dbReference>
<dbReference type="GO" id="GO:0098685">
    <property type="term" value="C:Schaffer collateral - CA1 synapse"/>
    <property type="evidence" value="ECO:0007669"/>
    <property type="project" value="Ensembl"/>
</dbReference>
<dbReference type="GO" id="GO:1902379">
    <property type="term" value="F:chemoattractant activity involved in axon guidance"/>
    <property type="evidence" value="ECO:0007669"/>
    <property type="project" value="Ensembl"/>
</dbReference>
<dbReference type="GO" id="GO:0005125">
    <property type="term" value="F:cytokine activity"/>
    <property type="evidence" value="ECO:0007669"/>
    <property type="project" value="Ensembl"/>
</dbReference>
<dbReference type="GO" id="GO:0005109">
    <property type="term" value="F:frizzled binding"/>
    <property type="evidence" value="ECO:0007669"/>
    <property type="project" value="Ensembl"/>
</dbReference>
<dbReference type="GO" id="GO:0019904">
    <property type="term" value="F:protein domain specific binding"/>
    <property type="evidence" value="ECO:0007669"/>
    <property type="project" value="Ensembl"/>
</dbReference>
<dbReference type="GO" id="GO:0005115">
    <property type="term" value="F:receptor tyrosine kinase-like orphan receptor binding"/>
    <property type="evidence" value="ECO:0007669"/>
    <property type="project" value="Ensembl"/>
</dbReference>
<dbReference type="GO" id="GO:0008595">
    <property type="term" value="P:anterior/posterior axis specification, embryo"/>
    <property type="evidence" value="ECO:0007669"/>
    <property type="project" value="Ensembl"/>
</dbReference>
<dbReference type="GO" id="GO:0003283">
    <property type="term" value="P:atrial septum development"/>
    <property type="evidence" value="ECO:0007669"/>
    <property type="project" value="Ensembl"/>
</dbReference>
<dbReference type="GO" id="GO:0048846">
    <property type="term" value="P:axon extension involved in axon guidance"/>
    <property type="evidence" value="ECO:0007669"/>
    <property type="project" value="Ensembl"/>
</dbReference>
<dbReference type="GO" id="GO:0030509">
    <property type="term" value="P:BMP signaling pathway"/>
    <property type="evidence" value="ECO:0007669"/>
    <property type="project" value="Ensembl"/>
</dbReference>
<dbReference type="GO" id="GO:0060070">
    <property type="term" value="P:canonical Wnt signaling pathway"/>
    <property type="evidence" value="ECO:0007669"/>
    <property type="project" value="Ensembl"/>
</dbReference>
<dbReference type="GO" id="GO:0051216">
    <property type="term" value="P:cartilage development"/>
    <property type="evidence" value="ECO:0007669"/>
    <property type="project" value="UniProtKB-KW"/>
</dbReference>
<dbReference type="GO" id="GO:0045165">
    <property type="term" value="P:cell fate commitment"/>
    <property type="evidence" value="ECO:0007669"/>
    <property type="project" value="TreeGrafter"/>
</dbReference>
<dbReference type="GO" id="GO:0071277">
    <property type="term" value="P:cellular response to calcium ion"/>
    <property type="evidence" value="ECO:0007669"/>
    <property type="project" value="Ensembl"/>
</dbReference>
<dbReference type="GO" id="GO:0071222">
    <property type="term" value="P:cellular response to lipopolysaccharide"/>
    <property type="evidence" value="ECO:0007669"/>
    <property type="project" value="Ensembl"/>
</dbReference>
<dbReference type="GO" id="GO:0071560">
    <property type="term" value="P:cellular response to transforming growth factor beta stimulus"/>
    <property type="evidence" value="ECO:0007669"/>
    <property type="project" value="Ensembl"/>
</dbReference>
<dbReference type="GO" id="GO:0071346">
    <property type="term" value="P:cellular response to type II interferon"/>
    <property type="evidence" value="ECO:0007669"/>
    <property type="project" value="Ensembl"/>
</dbReference>
<dbReference type="GO" id="GO:0060067">
    <property type="term" value="P:cervix development"/>
    <property type="evidence" value="ECO:0007669"/>
    <property type="project" value="Ensembl"/>
</dbReference>
<dbReference type="GO" id="GO:0036517">
    <property type="term" value="P:chemoattraction of serotonergic neuron axon"/>
    <property type="evidence" value="ECO:0007669"/>
    <property type="project" value="Ensembl"/>
</dbReference>
<dbReference type="GO" id="GO:0036518">
    <property type="term" value="P:chemorepulsion of dopaminergic neuron axon"/>
    <property type="evidence" value="ECO:0007669"/>
    <property type="project" value="Ensembl"/>
</dbReference>
<dbReference type="GO" id="GO:0090103">
    <property type="term" value="P:cochlea morphogenesis"/>
    <property type="evidence" value="ECO:0007669"/>
    <property type="project" value="Ensembl"/>
</dbReference>
<dbReference type="GO" id="GO:0060028">
    <property type="term" value="P:convergent extension involved in axis elongation"/>
    <property type="evidence" value="ECO:0007669"/>
    <property type="project" value="Ensembl"/>
</dbReference>
<dbReference type="GO" id="GO:0060029">
    <property type="term" value="P:convergent extension involved in organogenesis"/>
    <property type="evidence" value="ECO:0007669"/>
    <property type="project" value="Ensembl"/>
</dbReference>
<dbReference type="GO" id="GO:0042733">
    <property type="term" value="P:embryonic digit morphogenesis"/>
    <property type="evidence" value="ECO:0007669"/>
    <property type="project" value="Ensembl"/>
</dbReference>
<dbReference type="GO" id="GO:0048706">
    <property type="term" value="P:embryonic skeletal system development"/>
    <property type="evidence" value="ECO:0007669"/>
    <property type="project" value="Ensembl"/>
</dbReference>
<dbReference type="GO" id="GO:0010631">
    <property type="term" value="P:epithelial cell migration"/>
    <property type="evidence" value="ECO:0007669"/>
    <property type="project" value="Ensembl"/>
</dbReference>
<dbReference type="GO" id="GO:0060750">
    <property type="term" value="P:epithelial cell proliferation involved in mammary gland duct elongation"/>
    <property type="evidence" value="ECO:0007669"/>
    <property type="project" value="Ensembl"/>
</dbReference>
<dbReference type="GO" id="GO:0045198">
    <property type="term" value="P:establishment of epithelial cell apical/basal polarity"/>
    <property type="evidence" value="ECO:0007669"/>
    <property type="project" value="Ensembl"/>
</dbReference>
<dbReference type="GO" id="GO:0001736">
    <property type="term" value="P:establishment of planar polarity"/>
    <property type="evidence" value="ECO:0007669"/>
    <property type="project" value="Ensembl"/>
</dbReference>
<dbReference type="GO" id="GO:0060324">
    <property type="term" value="P:face development"/>
    <property type="evidence" value="ECO:0007669"/>
    <property type="project" value="Ensembl"/>
</dbReference>
<dbReference type="GO" id="GO:0008543">
    <property type="term" value="P:fibroblast growth factor receptor signaling pathway"/>
    <property type="evidence" value="ECO:0007669"/>
    <property type="project" value="Ensembl"/>
</dbReference>
<dbReference type="GO" id="GO:0001947">
    <property type="term" value="P:heart looping"/>
    <property type="evidence" value="ECO:0007669"/>
    <property type="project" value="Ensembl"/>
</dbReference>
<dbReference type="GO" id="GO:0071425">
    <property type="term" value="P:hematopoietic stem cell proliferation"/>
    <property type="evidence" value="ECO:0007669"/>
    <property type="project" value="Ensembl"/>
</dbReference>
<dbReference type="GO" id="GO:0007442">
    <property type="term" value="P:hindgut morphogenesis"/>
    <property type="evidence" value="ECO:0007669"/>
    <property type="project" value="Ensembl"/>
</dbReference>
<dbReference type="GO" id="GO:0048850">
    <property type="term" value="P:hypophysis morphogenesis"/>
    <property type="evidence" value="ECO:0007669"/>
    <property type="project" value="Ensembl"/>
</dbReference>
<dbReference type="GO" id="GO:0006954">
    <property type="term" value="P:inflammatory response"/>
    <property type="evidence" value="ECO:0007669"/>
    <property type="project" value="Ensembl"/>
</dbReference>
<dbReference type="GO" id="GO:0007254">
    <property type="term" value="P:JNK cascade"/>
    <property type="evidence" value="ECO:0007669"/>
    <property type="project" value="Ensembl"/>
</dbReference>
<dbReference type="GO" id="GO:0030216">
    <property type="term" value="P:keratinocyte differentiation"/>
    <property type="evidence" value="ECO:0007669"/>
    <property type="project" value="Ensembl"/>
</dbReference>
<dbReference type="GO" id="GO:0001822">
    <property type="term" value="P:kidney development"/>
    <property type="evidence" value="ECO:0007669"/>
    <property type="project" value="Ensembl"/>
</dbReference>
<dbReference type="GO" id="GO:0060599">
    <property type="term" value="P:lateral sprouting involved in mammary gland duct morphogenesis"/>
    <property type="evidence" value="ECO:0007669"/>
    <property type="project" value="Ensembl"/>
</dbReference>
<dbReference type="GO" id="GO:0030324">
    <property type="term" value="P:lung development"/>
    <property type="evidence" value="ECO:0007669"/>
    <property type="project" value="Ensembl"/>
</dbReference>
<dbReference type="GO" id="GO:0010742">
    <property type="term" value="P:macrophage derived foam cell differentiation"/>
    <property type="evidence" value="ECO:0007669"/>
    <property type="project" value="Ensembl"/>
</dbReference>
<dbReference type="GO" id="GO:0008584">
    <property type="term" value="P:male gonad development"/>
    <property type="evidence" value="ECO:0007669"/>
    <property type="project" value="Ensembl"/>
</dbReference>
<dbReference type="GO" id="GO:0060744">
    <property type="term" value="P:mammary gland branching involved in thelarche"/>
    <property type="evidence" value="ECO:0007669"/>
    <property type="project" value="Ensembl"/>
</dbReference>
<dbReference type="GO" id="GO:0140013">
    <property type="term" value="P:meiotic nuclear division"/>
    <property type="evidence" value="ECO:0007669"/>
    <property type="project" value="Ensembl"/>
</dbReference>
<dbReference type="GO" id="GO:0097325">
    <property type="term" value="P:melanocyte proliferation"/>
    <property type="evidence" value="ECO:0007669"/>
    <property type="project" value="Ensembl"/>
</dbReference>
<dbReference type="GO" id="GO:0010463">
    <property type="term" value="P:mesenchymal cell proliferation"/>
    <property type="evidence" value="ECO:0007669"/>
    <property type="project" value="Ensembl"/>
</dbReference>
<dbReference type="GO" id="GO:0060638">
    <property type="term" value="P:mesenchymal-epithelial cell signaling"/>
    <property type="evidence" value="ECO:0007669"/>
    <property type="project" value="Ensembl"/>
</dbReference>
<dbReference type="GO" id="GO:0060809">
    <property type="term" value="P:mesodermal to mesenchymal transition involved in gastrulation"/>
    <property type="evidence" value="ECO:0007669"/>
    <property type="project" value="Ensembl"/>
</dbReference>
<dbReference type="GO" id="GO:1904948">
    <property type="term" value="P:midbrain dopaminergic neuron differentiation"/>
    <property type="evidence" value="ECO:0007669"/>
    <property type="project" value="Ensembl"/>
</dbReference>
<dbReference type="GO" id="GO:0007494">
    <property type="term" value="P:midgut development"/>
    <property type="evidence" value="ECO:0007669"/>
    <property type="project" value="Ensembl"/>
</dbReference>
<dbReference type="GO" id="GO:0043066">
    <property type="term" value="P:negative regulation of apoptotic process"/>
    <property type="evidence" value="ECO:0007669"/>
    <property type="project" value="Ensembl"/>
</dbReference>
<dbReference type="GO" id="GO:0048843">
    <property type="term" value="P:negative regulation of axon extension involved in axon guidance"/>
    <property type="evidence" value="ECO:0007669"/>
    <property type="project" value="Ensembl"/>
</dbReference>
<dbReference type="GO" id="GO:0030514">
    <property type="term" value="P:negative regulation of BMP signaling pathway"/>
    <property type="evidence" value="ECO:0007669"/>
    <property type="project" value="Ensembl"/>
</dbReference>
<dbReference type="GO" id="GO:0090090">
    <property type="term" value="P:negative regulation of canonical Wnt signaling pathway"/>
    <property type="evidence" value="ECO:0007669"/>
    <property type="project" value="Ensembl"/>
</dbReference>
<dbReference type="GO" id="GO:1904934">
    <property type="term" value="P:negative regulation of cell proliferation in midbrain"/>
    <property type="evidence" value="ECO:0007669"/>
    <property type="project" value="Ensembl"/>
</dbReference>
<dbReference type="GO" id="GO:0045892">
    <property type="term" value="P:negative regulation of DNA-templated transcription"/>
    <property type="evidence" value="ECO:0007669"/>
    <property type="project" value="Ensembl"/>
</dbReference>
<dbReference type="GO" id="GO:0050680">
    <property type="term" value="P:negative regulation of epithelial cell proliferation"/>
    <property type="evidence" value="ECO:0007669"/>
    <property type="project" value="Ensembl"/>
</dbReference>
<dbReference type="GO" id="GO:0045599">
    <property type="term" value="P:negative regulation of fat cell differentiation"/>
    <property type="evidence" value="ECO:0007669"/>
    <property type="project" value="Ensembl"/>
</dbReference>
<dbReference type="GO" id="GO:0040037">
    <property type="term" value="P:negative regulation of fibroblast growth factor receptor signaling pathway"/>
    <property type="evidence" value="ECO:0007669"/>
    <property type="project" value="Ensembl"/>
</dbReference>
<dbReference type="GO" id="GO:0048022">
    <property type="term" value="P:negative regulation of melanin biosynthetic process"/>
    <property type="evidence" value="ECO:0007669"/>
    <property type="project" value="Ensembl"/>
</dbReference>
<dbReference type="GO" id="GO:0072201">
    <property type="term" value="P:negative regulation of mesenchymal cell proliferation"/>
    <property type="evidence" value="ECO:0007669"/>
    <property type="project" value="Ensembl"/>
</dbReference>
<dbReference type="GO" id="GO:0060686">
    <property type="term" value="P:negative regulation of prostatic bud formation"/>
    <property type="evidence" value="ECO:0007669"/>
    <property type="project" value="Ensembl"/>
</dbReference>
<dbReference type="GO" id="GO:0051964">
    <property type="term" value="P:negative regulation of synapse assembly"/>
    <property type="evidence" value="ECO:0007669"/>
    <property type="project" value="Ensembl"/>
</dbReference>
<dbReference type="GO" id="GO:0001843">
    <property type="term" value="P:neural tube closure"/>
    <property type="evidence" value="ECO:0007669"/>
    <property type="project" value="Ensembl"/>
</dbReference>
<dbReference type="GO" id="GO:0048570">
    <property type="term" value="P:notochord morphogenesis"/>
    <property type="evidence" value="ECO:0007669"/>
    <property type="project" value="Ensembl"/>
</dbReference>
<dbReference type="GO" id="GO:0021891">
    <property type="term" value="P:olfactory bulb interneuron development"/>
    <property type="evidence" value="ECO:0007669"/>
    <property type="project" value="Ensembl"/>
</dbReference>
<dbReference type="GO" id="GO:0048341">
    <property type="term" value="P:paraxial mesoderm formation"/>
    <property type="evidence" value="ECO:0007669"/>
    <property type="project" value="Ensembl"/>
</dbReference>
<dbReference type="GO" id="GO:0003344">
    <property type="term" value="P:pericardium morphogenesis"/>
    <property type="evidence" value="ECO:0007669"/>
    <property type="project" value="Ensembl"/>
</dbReference>
<dbReference type="GO" id="GO:0007200">
    <property type="term" value="P:phospholipase C-activating G protein-coupled receptor signaling pathway"/>
    <property type="evidence" value="ECO:0007669"/>
    <property type="project" value="Ensembl"/>
</dbReference>
<dbReference type="GO" id="GO:0045766">
    <property type="term" value="P:positive regulation of angiogenesis"/>
    <property type="evidence" value="ECO:0007669"/>
    <property type="project" value="Ensembl"/>
</dbReference>
<dbReference type="GO" id="GO:2001235">
    <property type="term" value="P:positive regulation of apoptotic signaling pathway"/>
    <property type="evidence" value="ECO:0007669"/>
    <property type="project" value="Ensembl"/>
</dbReference>
<dbReference type="GO" id="GO:0061036">
    <property type="term" value="P:positive regulation of cartilage development"/>
    <property type="evidence" value="ECO:0007669"/>
    <property type="project" value="Ensembl"/>
</dbReference>
<dbReference type="GO" id="GO:2000049">
    <property type="term" value="P:positive regulation of cell-cell adhesion mediated by cadherin"/>
    <property type="evidence" value="ECO:0007669"/>
    <property type="project" value="Ensembl"/>
</dbReference>
<dbReference type="GO" id="GO:0032722">
    <property type="term" value="P:positive regulation of chemokine production"/>
    <property type="evidence" value="ECO:0007669"/>
    <property type="project" value="Ensembl"/>
</dbReference>
<dbReference type="GO" id="GO:0045807">
    <property type="term" value="P:positive regulation of endocytosis"/>
    <property type="evidence" value="ECO:0007669"/>
    <property type="project" value="Ensembl"/>
</dbReference>
<dbReference type="GO" id="GO:0010595">
    <property type="term" value="P:positive regulation of endothelial cell migration"/>
    <property type="evidence" value="ECO:0007669"/>
    <property type="project" value="Ensembl"/>
</dbReference>
<dbReference type="GO" id="GO:0001938">
    <property type="term" value="P:positive regulation of endothelial cell proliferation"/>
    <property type="evidence" value="ECO:0007669"/>
    <property type="project" value="Ensembl"/>
</dbReference>
<dbReference type="GO" id="GO:0048146">
    <property type="term" value="P:positive regulation of fibroblast proliferation"/>
    <property type="evidence" value="ECO:0007669"/>
    <property type="project" value="Ensembl"/>
</dbReference>
<dbReference type="GO" id="GO:1902035">
    <property type="term" value="P:positive regulation of hematopoietic stem cell proliferation"/>
    <property type="evidence" value="ECO:0007669"/>
    <property type="project" value="Ensembl"/>
</dbReference>
<dbReference type="GO" id="GO:0050729">
    <property type="term" value="P:positive regulation of inflammatory response"/>
    <property type="evidence" value="ECO:0007669"/>
    <property type="project" value="Ensembl"/>
</dbReference>
<dbReference type="GO" id="GO:0032731">
    <property type="term" value="P:positive regulation of interleukin-1 beta production"/>
    <property type="evidence" value="ECO:0007669"/>
    <property type="project" value="Ensembl"/>
</dbReference>
<dbReference type="GO" id="GO:0032755">
    <property type="term" value="P:positive regulation of interleukin-6 production"/>
    <property type="evidence" value="ECO:0007669"/>
    <property type="project" value="Ensembl"/>
</dbReference>
<dbReference type="GO" id="GO:0032757">
    <property type="term" value="P:positive regulation of interleukin-8 production"/>
    <property type="evidence" value="ECO:0007669"/>
    <property type="project" value="Ensembl"/>
</dbReference>
<dbReference type="GO" id="GO:0046330">
    <property type="term" value="P:positive regulation of JNK cascade"/>
    <property type="evidence" value="ECO:0007669"/>
    <property type="project" value="Ensembl"/>
</dbReference>
<dbReference type="GO" id="GO:0043032">
    <property type="term" value="P:positive regulation of macrophage activation"/>
    <property type="evidence" value="ECO:0007669"/>
    <property type="project" value="Ensembl"/>
</dbReference>
<dbReference type="GO" id="GO:0060907">
    <property type="term" value="P:positive regulation of macrophage cytokine production"/>
    <property type="evidence" value="ECO:0007669"/>
    <property type="project" value="Ensembl"/>
</dbReference>
<dbReference type="GO" id="GO:0045836">
    <property type="term" value="P:positive regulation of meiotic nuclear division"/>
    <property type="evidence" value="ECO:0007669"/>
    <property type="project" value="Ensembl"/>
</dbReference>
<dbReference type="GO" id="GO:0002053">
    <property type="term" value="P:positive regulation of mesenchymal cell proliferation"/>
    <property type="evidence" value="ECO:0007669"/>
    <property type="project" value="Ensembl"/>
</dbReference>
<dbReference type="GO" id="GO:0150012">
    <property type="term" value="P:positive regulation of neuron projection arborization"/>
    <property type="evidence" value="ECO:0007669"/>
    <property type="project" value="Ensembl"/>
</dbReference>
<dbReference type="GO" id="GO:0010976">
    <property type="term" value="P:positive regulation of neuron projection development"/>
    <property type="evidence" value="ECO:0007669"/>
    <property type="project" value="Ensembl"/>
</dbReference>
<dbReference type="GO" id="GO:2000052">
    <property type="term" value="P:positive regulation of non-canonical Wnt signaling pathway"/>
    <property type="evidence" value="ECO:0007669"/>
    <property type="project" value="Ensembl"/>
</dbReference>
<dbReference type="GO" id="GO:0045778">
    <property type="term" value="P:positive regulation of ossification"/>
    <property type="evidence" value="ECO:0007669"/>
    <property type="project" value="Ensembl"/>
</dbReference>
<dbReference type="GO" id="GO:0045732">
    <property type="term" value="P:positive regulation of protein catabolic process"/>
    <property type="evidence" value="ECO:0007669"/>
    <property type="project" value="Ensembl"/>
</dbReference>
<dbReference type="GO" id="GO:0010820">
    <property type="term" value="P:positive regulation of T cell chemotaxis"/>
    <property type="evidence" value="ECO:0007669"/>
    <property type="project" value="Ensembl"/>
</dbReference>
<dbReference type="GO" id="GO:0070245">
    <property type="term" value="P:positive regulation of thymocyte apoptotic process"/>
    <property type="evidence" value="ECO:0007669"/>
    <property type="project" value="Ensembl"/>
</dbReference>
<dbReference type="GO" id="GO:0051885">
    <property type="term" value="P:positive regulation of timing of anagen"/>
    <property type="evidence" value="ECO:0007669"/>
    <property type="project" value="Ensembl"/>
</dbReference>
<dbReference type="GO" id="GO:0045944">
    <property type="term" value="P:positive regulation of transcription by RNA polymerase II"/>
    <property type="evidence" value="ECO:0007669"/>
    <property type="project" value="Ensembl"/>
</dbReference>
<dbReference type="GO" id="GO:0032760">
    <property type="term" value="P:positive regulation of tumor necrosis factor production"/>
    <property type="evidence" value="ECO:0007669"/>
    <property type="project" value="Ensembl"/>
</dbReference>
<dbReference type="GO" id="GO:0060340">
    <property type="term" value="P:positive regulation of type I interferon-mediated signaling pathway"/>
    <property type="evidence" value="ECO:0007669"/>
    <property type="project" value="Ensembl"/>
</dbReference>
<dbReference type="GO" id="GO:0032729">
    <property type="term" value="P:positive regulation of type II interferon production"/>
    <property type="evidence" value="ECO:0007669"/>
    <property type="project" value="Ensembl"/>
</dbReference>
<dbReference type="GO" id="GO:0036342">
    <property type="term" value="P:post-anal tail morphogenesis"/>
    <property type="evidence" value="ECO:0007669"/>
    <property type="project" value="Ensembl"/>
</dbReference>
<dbReference type="GO" id="GO:0099170">
    <property type="term" value="P:postsynaptic modulation of chemical synaptic transmission"/>
    <property type="evidence" value="ECO:0007669"/>
    <property type="project" value="Ensembl"/>
</dbReference>
<dbReference type="GO" id="GO:0003138">
    <property type="term" value="P:primary heart field specification"/>
    <property type="evidence" value="ECO:0007669"/>
    <property type="project" value="Ensembl"/>
</dbReference>
<dbReference type="GO" id="GO:0090009">
    <property type="term" value="P:primitive streak formation"/>
    <property type="evidence" value="ECO:0007669"/>
    <property type="project" value="Ensembl"/>
</dbReference>
<dbReference type="GO" id="GO:0008104">
    <property type="term" value="P:protein localization"/>
    <property type="evidence" value="ECO:0007669"/>
    <property type="project" value="Ensembl"/>
</dbReference>
<dbReference type="GO" id="GO:0060762">
    <property type="term" value="P:regulation of branching involved in mammary gland duct morphogenesis"/>
    <property type="evidence" value="ECO:0007669"/>
    <property type="project" value="Ensembl"/>
</dbReference>
<dbReference type="GO" id="GO:0043122">
    <property type="term" value="P:regulation of canonical NF-kappaB signal transduction"/>
    <property type="evidence" value="ECO:0007669"/>
    <property type="project" value="Ensembl"/>
</dbReference>
<dbReference type="GO" id="GO:0099175">
    <property type="term" value="P:regulation of postsynapse organization"/>
    <property type="evidence" value="ECO:0007669"/>
    <property type="project" value="Ensembl"/>
</dbReference>
<dbReference type="GO" id="GO:0099566">
    <property type="term" value="P:regulation of postsynaptic cytosolic calcium ion concentration"/>
    <property type="evidence" value="ECO:0007669"/>
    <property type="project" value="Ensembl"/>
</dbReference>
<dbReference type="GO" id="GO:0032880">
    <property type="term" value="P:regulation of protein localization"/>
    <property type="evidence" value="ECO:0007669"/>
    <property type="project" value="Ensembl"/>
</dbReference>
<dbReference type="GO" id="GO:0003139">
    <property type="term" value="P:secondary heart field specification"/>
    <property type="evidence" value="ECO:0007669"/>
    <property type="project" value="Ensembl"/>
</dbReference>
<dbReference type="GO" id="GO:0062009">
    <property type="term" value="P:secondary palate development"/>
    <property type="evidence" value="ECO:0007669"/>
    <property type="project" value="Ensembl"/>
</dbReference>
<dbReference type="GO" id="GO:0001756">
    <property type="term" value="P:somitogenesis"/>
    <property type="evidence" value="ECO:0007669"/>
    <property type="project" value="Ensembl"/>
</dbReference>
<dbReference type="GO" id="GO:0070242">
    <property type="term" value="P:thymocyte apoptotic process"/>
    <property type="evidence" value="ECO:0007669"/>
    <property type="project" value="Ensembl"/>
</dbReference>
<dbReference type="GO" id="GO:0003323">
    <property type="term" value="P:type B pancreatic cell development"/>
    <property type="evidence" value="ECO:0007669"/>
    <property type="project" value="Ensembl"/>
</dbReference>
<dbReference type="GO" id="GO:0060157">
    <property type="term" value="P:urinary bladder development"/>
    <property type="evidence" value="ECO:0007669"/>
    <property type="project" value="Ensembl"/>
</dbReference>
<dbReference type="GO" id="GO:0060065">
    <property type="term" value="P:uterus development"/>
    <property type="evidence" value="ECO:0007669"/>
    <property type="project" value="Ensembl"/>
</dbReference>
<dbReference type="GO" id="GO:0060068">
    <property type="term" value="P:vagina development"/>
    <property type="evidence" value="ECO:0007669"/>
    <property type="project" value="Ensembl"/>
</dbReference>
<dbReference type="GO" id="GO:0003281">
    <property type="term" value="P:ventricular septum development"/>
    <property type="evidence" value="ECO:0007669"/>
    <property type="project" value="Ensembl"/>
</dbReference>
<dbReference type="GO" id="GO:0007223">
    <property type="term" value="P:Wnt signaling pathway, calcium modulating pathway"/>
    <property type="evidence" value="ECO:0007669"/>
    <property type="project" value="Ensembl"/>
</dbReference>
<dbReference type="GO" id="GO:0060071">
    <property type="term" value="P:Wnt signaling pathway, planar cell polarity pathway"/>
    <property type="evidence" value="ECO:0007669"/>
    <property type="project" value="Ensembl"/>
</dbReference>
<dbReference type="GO" id="GO:0042060">
    <property type="term" value="P:wound healing"/>
    <property type="evidence" value="ECO:0007669"/>
    <property type="project" value="Ensembl"/>
</dbReference>
<dbReference type="CDD" id="cd19347">
    <property type="entry name" value="Wnt_Wnt5a"/>
    <property type="match status" value="1"/>
</dbReference>
<dbReference type="FunFam" id="3.30.2460.20:FF:000001">
    <property type="entry name" value="Wnt homolog"/>
    <property type="match status" value="1"/>
</dbReference>
<dbReference type="Gene3D" id="3.30.2460.20">
    <property type="match status" value="1"/>
</dbReference>
<dbReference type="InterPro" id="IPR005817">
    <property type="entry name" value="Wnt"/>
</dbReference>
<dbReference type="InterPro" id="IPR043158">
    <property type="entry name" value="Wnt_C"/>
</dbReference>
<dbReference type="InterPro" id="IPR018161">
    <property type="entry name" value="Wnt_CS"/>
</dbReference>
<dbReference type="PANTHER" id="PTHR12027:SF33">
    <property type="entry name" value="PROTEIN WNT-5A"/>
    <property type="match status" value="1"/>
</dbReference>
<dbReference type="PANTHER" id="PTHR12027">
    <property type="entry name" value="WNT RELATED"/>
    <property type="match status" value="1"/>
</dbReference>
<dbReference type="Pfam" id="PF00110">
    <property type="entry name" value="wnt"/>
    <property type="match status" value="1"/>
</dbReference>
<dbReference type="PRINTS" id="PR01349">
    <property type="entry name" value="WNTPROTEIN"/>
</dbReference>
<dbReference type="SMART" id="SM00097">
    <property type="entry name" value="WNT1"/>
    <property type="match status" value="1"/>
</dbReference>
<dbReference type="PROSITE" id="PS00246">
    <property type="entry name" value="WNT1"/>
    <property type="match status" value="1"/>
</dbReference>
<protein>
    <recommendedName>
        <fullName evidence="8">Protein Wnt-5a</fullName>
    </recommendedName>
</protein>
<proteinExistence type="evidence at transcript level"/>
<organism>
    <name type="scientific">Oryctolagus cuniculus</name>
    <name type="common">Rabbit</name>
    <dbReference type="NCBI Taxonomy" id="9986"/>
    <lineage>
        <taxon>Eukaryota</taxon>
        <taxon>Metazoa</taxon>
        <taxon>Chordata</taxon>
        <taxon>Craniata</taxon>
        <taxon>Vertebrata</taxon>
        <taxon>Euteleostomi</taxon>
        <taxon>Mammalia</taxon>
        <taxon>Eutheria</taxon>
        <taxon>Euarchontoglires</taxon>
        <taxon>Glires</taxon>
        <taxon>Lagomorpha</taxon>
        <taxon>Leporidae</taxon>
        <taxon>Oryctolagus</taxon>
    </lineage>
</organism>
<accession>Q27Q52</accession>
<sequence length="380" mass="42313">MKKSIGILSPGVALGTAGSAMSSKFFVMALAVFFSFAQVVIEANSWWSLGMNNPVQMSEVYIIGAQPLCSQLAGLSQGQKKLCHLYQDHMQYIGEGAKTGIKECQYQFRHRRWNCSTVDNTSVFGRVMQIGSRETAFTYAVSAAGVVNAMSRACREGELSTCGCSRAARPKDLPRDWLWGGCGDNIDYGYRFAKEFVDARERERIHAKGSYESARILMNLHNNEAGRRTVYNLADVACKCHGVSGSCSLKTCWLQLADFRKVGDALKEKYDSAAAMRLNSRGKLVQVNSRFNSPTTQDLVYIDPSPDYCVRNESTGSLGTQGRLCNKTSEGMDGCELMCCGRGYDQFKTVQTERCHCKFHWCCYVKCKKCTEIVDQFVCK</sequence>
<comment type="function">
    <text evidence="1 4 7">Ligand for members of the frizzled family of seven transmembrane receptors. Can activate or inhibit canonical Wnt signaling, depending on receptor context. In the presence of FZD4, activates beta-catenin signaling. In the presence of ROR2, inhibits the canonical Wnt pathway by promoting beta-catenin degradation through a GSK3-independent pathway which involves down-regulation of beta-catenin-induced reporter gene expression (By similarity). Suppression of the canonical pathway allows chondrogenesis to occur (PubMed:16754689). Inhibits tumor formation. Stimulates cell migration. Decreases proliferation, migration, invasiveness and clonogenicity of carcinoma cells and may act as a tumor suppressor. Mediates motility of melanoma cells (By similarity). Required during embryogenesis for extension of the primary anterior-posterior axis and for outgrowth of limbs and the genital tubercle (By similarity). Inhibits type II collagen expression in chondrocytes (PubMed:16754689).</text>
</comment>
<comment type="subunit">
    <text evidence="1 4">Forms a soluble 1:1 complex with AFM; this prevents oligomerization and is required for prolonged biological activity. The complex with AFM may represent the physiological form in body fluids (By similarity). Homooligomer; disulfide-linked, leading to inactivation (in vitro). Interacts with PORCN. Interacts with WLS (By similarity). Interacts with glypican GCP3 (By similarity). Interacts with PKD1 (via extracellular domain) (By similarity). Interacts with TMEM67 (By similarity).</text>
</comment>
<comment type="subcellular location">
    <subcellularLocation>
        <location evidence="4">Secreted</location>
        <location evidence="4">Extracellular space</location>
        <location evidence="4">Extracellular matrix</location>
    </subcellularLocation>
    <subcellularLocation>
        <location evidence="7">Secreted</location>
    </subcellularLocation>
</comment>
<comment type="induction">
    <text evidence="7">In cartilage and cultured chondrocytes, induced by interleukin IL1B.</text>
</comment>
<comment type="PTM">
    <text evidence="1">Glycosylation is necessary for secretion but not for activity.</text>
</comment>
<comment type="PTM">
    <text evidence="2 5">Palmitoleoylation is required for efficient binding to frizzled receptors. Depalmitoleoylation leads to Wnt signaling pathway inhibition.</text>
</comment>
<comment type="PTM">
    <text evidence="1">Proteolytic processing by TIKI1 and TIKI2 promotes oxidation and formation of large disulfide-bond oligomers, leading to inactivation of WNT5A.</text>
</comment>
<comment type="similarity">
    <text evidence="6">Belongs to the Wnt family.</text>
</comment>
<feature type="signal peptide" evidence="6">
    <location>
        <begin position="1"/>
        <end position="35"/>
    </location>
</feature>
<feature type="propeptide" id="PRO_0000352753" evidence="1">
    <location>
        <begin position="36"/>
        <end position="61"/>
    </location>
</feature>
<feature type="chain" id="PRO_0000352754" description="Protein Wnt-5a" evidence="1">
    <location>
        <begin position="62"/>
        <end position="380"/>
    </location>
</feature>
<feature type="lipid moiety-binding region" description="O-palmitoleoyl serine; by PORCN" evidence="5">
    <location>
        <position position="244"/>
    </location>
</feature>
<feature type="glycosylation site" description="N-linked (GlcNAc...) asparagine" evidence="6">
    <location>
        <position position="114"/>
    </location>
</feature>
<feature type="glycosylation site" description="N-linked (GlcNAc...) asparagine" evidence="6">
    <location>
        <position position="120"/>
    </location>
</feature>
<feature type="glycosylation site" description="N-linked (GlcNAc...) asparagine" evidence="6">
    <location>
        <position position="312"/>
    </location>
</feature>
<feature type="glycosylation site" description="N-linked (GlcNAc...) asparagine" evidence="6">
    <location>
        <position position="326"/>
    </location>
</feature>
<feature type="disulfide bond" evidence="3">
    <location>
        <begin position="104"/>
        <end position="115"/>
    </location>
</feature>
<feature type="disulfide bond" evidence="3">
    <location>
        <begin position="154"/>
        <end position="162"/>
    </location>
</feature>
<feature type="disulfide bond" evidence="3">
    <location>
        <begin position="164"/>
        <end position="182"/>
    </location>
</feature>
<feature type="disulfide bond" evidence="3">
    <location>
        <begin position="238"/>
        <end position="252"/>
    </location>
</feature>
<feature type="disulfide bond" evidence="3">
    <location>
        <begin position="240"/>
        <end position="247"/>
    </location>
</feature>
<feature type="disulfide bond" evidence="3">
    <location>
        <begin position="309"/>
        <end position="340"/>
    </location>
</feature>
<feature type="disulfide bond" evidence="3">
    <location>
        <begin position="325"/>
        <end position="335"/>
    </location>
</feature>
<feature type="disulfide bond" evidence="3">
    <location>
        <begin position="339"/>
        <end position="379"/>
    </location>
</feature>
<feature type="disulfide bond" evidence="3">
    <location>
        <begin position="355"/>
        <end position="370"/>
    </location>
</feature>
<feature type="disulfide bond" evidence="3">
    <location>
        <begin position="357"/>
        <end position="367"/>
    </location>
</feature>
<feature type="disulfide bond" evidence="3">
    <location>
        <begin position="362"/>
        <end position="363"/>
    </location>
</feature>
<gene>
    <name evidence="8" type="primary">WNT5A</name>
</gene>